<gene>
    <name evidence="1" type="primary">atpH</name>
    <name type="ordered locus">BMQ_5151</name>
</gene>
<dbReference type="EMBL" id="M20255">
    <property type="protein sequence ID" value="AAA82523.1"/>
    <property type="molecule type" value="Genomic_DNA"/>
</dbReference>
<dbReference type="EMBL" id="CP001983">
    <property type="protein sequence ID" value="ADE72129.1"/>
    <property type="molecule type" value="Genomic_DNA"/>
</dbReference>
<dbReference type="PIR" id="E31482">
    <property type="entry name" value="E31482"/>
</dbReference>
<dbReference type="RefSeq" id="WP_013059802.1">
    <property type="nucleotide sequence ID" value="NC_014019.1"/>
</dbReference>
<dbReference type="SMR" id="P17675"/>
<dbReference type="STRING" id="545693.BMQ_5151"/>
<dbReference type="KEGG" id="bmq:BMQ_5151"/>
<dbReference type="eggNOG" id="COG0712">
    <property type="taxonomic scope" value="Bacteria"/>
</dbReference>
<dbReference type="HOGENOM" id="CLU_085114_4_1_9"/>
<dbReference type="Proteomes" id="UP000000935">
    <property type="component" value="Chromosome"/>
</dbReference>
<dbReference type="GO" id="GO:0005886">
    <property type="term" value="C:plasma membrane"/>
    <property type="evidence" value="ECO:0007669"/>
    <property type="project" value="UniProtKB-SubCell"/>
</dbReference>
<dbReference type="GO" id="GO:0045259">
    <property type="term" value="C:proton-transporting ATP synthase complex"/>
    <property type="evidence" value="ECO:0007669"/>
    <property type="project" value="UniProtKB-KW"/>
</dbReference>
<dbReference type="GO" id="GO:0046933">
    <property type="term" value="F:proton-transporting ATP synthase activity, rotational mechanism"/>
    <property type="evidence" value="ECO:0007669"/>
    <property type="project" value="UniProtKB-UniRule"/>
</dbReference>
<dbReference type="Gene3D" id="1.10.520.20">
    <property type="entry name" value="N-terminal domain of the delta subunit of the F1F0-ATP synthase"/>
    <property type="match status" value="1"/>
</dbReference>
<dbReference type="HAMAP" id="MF_01416">
    <property type="entry name" value="ATP_synth_delta_bact"/>
    <property type="match status" value="1"/>
</dbReference>
<dbReference type="InterPro" id="IPR026015">
    <property type="entry name" value="ATP_synth_OSCP/delta_N_sf"/>
</dbReference>
<dbReference type="InterPro" id="IPR020781">
    <property type="entry name" value="ATPase_OSCP/d_CS"/>
</dbReference>
<dbReference type="InterPro" id="IPR000711">
    <property type="entry name" value="ATPase_OSCP/dsu"/>
</dbReference>
<dbReference type="NCBIfam" id="TIGR01145">
    <property type="entry name" value="ATP_synt_delta"/>
    <property type="match status" value="1"/>
</dbReference>
<dbReference type="NCBIfam" id="NF004403">
    <property type="entry name" value="PRK05758.2-4"/>
    <property type="match status" value="1"/>
</dbReference>
<dbReference type="PANTHER" id="PTHR11910">
    <property type="entry name" value="ATP SYNTHASE DELTA CHAIN"/>
    <property type="match status" value="1"/>
</dbReference>
<dbReference type="Pfam" id="PF00213">
    <property type="entry name" value="OSCP"/>
    <property type="match status" value="1"/>
</dbReference>
<dbReference type="PRINTS" id="PR00125">
    <property type="entry name" value="ATPASEDELTA"/>
</dbReference>
<dbReference type="SUPFAM" id="SSF47928">
    <property type="entry name" value="N-terminal domain of the delta subunit of the F1F0-ATP synthase"/>
    <property type="match status" value="1"/>
</dbReference>
<dbReference type="PROSITE" id="PS00389">
    <property type="entry name" value="ATPASE_DELTA"/>
    <property type="match status" value="1"/>
</dbReference>
<reference key="1">
    <citation type="journal article" date="1989" name="J. Biol. Chem.">
        <title>Organization and sequence of the genes coding for the proton-translocating ATPase of Bacillus megaterium.</title>
        <authorList>
            <person name="Brusilow W.S.A."/>
            <person name="Scarpetta M.A."/>
            <person name="Hawthorne C.A."/>
            <person name="Clark W.P."/>
        </authorList>
    </citation>
    <scope>NUCLEOTIDE SEQUENCE [GENOMIC DNA]</scope>
</reference>
<reference key="2">
    <citation type="journal article" date="2011" name="J. Bacteriol.">
        <title>Genome sequences of the biotechnologically important Bacillus megaterium strains QM B1551 and DSM319.</title>
        <authorList>
            <person name="Eppinger M."/>
            <person name="Bunk B."/>
            <person name="Johns M.A."/>
            <person name="Edirisinghe J.N."/>
            <person name="Kutumbaka K.K."/>
            <person name="Koenig S.S."/>
            <person name="Creasy H.H."/>
            <person name="Rosovitz M.J."/>
            <person name="Riley D.R."/>
            <person name="Daugherty S."/>
            <person name="Martin M."/>
            <person name="Elbourne L.D."/>
            <person name="Paulsen I."/>
            <person name="Biedendieck R."/>
            <person name="Braun C."/>
            <person name="Grayburn S."/>
            <person name="Dhingra S."/>
            <person name="Lukyanchuk V."/>
            <person name="Ball B."/>
            <person name="Ul-Qamar R."/>
            <person name="Seibel J."/>
            <person name="Bremer E."/>
            <person name="Jahn D."/>
            <person name="Ravel J."/>
            <person name="Vary P.S."/>
        </authorList>
    </citation>
    <scope>NUCLEOTIDE SEQUENCE [LARGE SCALE GENOMIC DNA]</scope>
    <source>
        <strain>ATCC 12872 / DSM 1804 / QMB1551</strain>
    </source>
</reference>
<name>ATPD_PRIM1</name>
<comment type="function">
    <text evidence="1">F(1)F(0) ATP synthase produces ATP from ADP in the presence of a proton or sodium gradient. F-type ATPases consist of two structural domains, F(1) containing the extramembraneous catalytic core and F(0) containing the membrane proton channel, linked together by a central stalk and a peripheral stalk. During catalysis, ATP synthesis in the catalytic domain of F(1) is coupled via a rotary mechanism of the central stalk subunits to proton translocation.</text>
</comment>
<comment type="function">
    <text evidence="1">This protein is part of the stalk that links CF(0) to CF(1). It either transmits conformational changes from CF(0) to CF(1) or is implicated in proton conduction.</text>
</comment>
<comment type="subunit">
    <text evidence="1">F-type ATPases have 2 components, F(1) - the catalytic core - and F(0) - the membrane proton channel. F(1) has five subunits: alpha(3), beta(3), gamma(1), delta(1), epsilon(1). F(0) has three main subunits: a(1), b(2) and c(10-14). The alpha and beta chains form an alternating ring which encloses part of the gamma chain. F(1) is attached to F(0) by a central stalk formed by the gamma and epsilon chains, while a peripheral stalk is formed by the delta and b chains.</text>
</comment>
<comment type="subcellular location">
    <subcellularLocation>
        <location evidence="1">Cell membrane</location>
        <topology evidence="1">Peripheral membrane protein</topology>
    </subcellularLocation>
</comment>
<comment type="similarity">
    <text evidence="1">Belongs to the ATPase delta chain family.</text>
</comment>
<feature type="chain" id="PRO_0000193455" description="ATP synthase subunit delta">
    <location>
        <begin position="1"/>
        <end position="181"/>
    </location>
</feature>
<feature type="sequence conflict" description="In Ref. 1; AAA82523." evidence="2" ref="1">
    <original>SL</original>
    <variation>TV</variation>
    <location>
        <begin position="147"/>
        <end position="148"/>
    </location>
</feature>
<evidence type="ECO:0000255" key="1">
    <source>
        <dbReference type="HAMAP-Rule" id="MF_01416"/>
    </source>
</evidence>
<evidence type="ECO:0000305" key="2"/>
<protein>
    <recommendedName>
        <fullName evidence="1">ATP synthase subunit delta</fullName>
    </recommendedName>
    <alternativeName>
        <fullName evidence="1">ATP synthase F(1) sector subunit delta</fullName>
    </alternativeName>
    <alternativeName>
        <fullName evidence="1">F-type ATPase subunit delta</fullName>
        <shortName evidence="1">F-ATPase subunit delta</shortName>
    </alternativeName>
</protein>
<organism>
    <name type="scientific">Priestia megaterium (strain ATCC 12872 / QMB1551)</name>
    <name type="common">Bacillus megaterium</name>
    <dbReference type="NCBI Taxonomy" id="545693"/>
    <lineage>
        <taxon>Bacteria</taxon>
        <taxon>Bacillati</taxon>
        <taxon>Bacillota</taxon>
        <taxon>Bacilli</taxon>
        <taxon>Bacillales</taxon>
        <taxon>Bacillaceae</taxon>
        <taxon>Priestia</taxon>
    </lineage>
</organism>
<proteinExistence type="inferred from homology"/>
<sequence>MSQPAVAKRYALALFQLATEKQMIDEMQDQLQIVEEVFAKTPELMDVLTHPKITIERKKQFVSEAFAELSPTVQHTVLLLLERHRIQIVSEMVKEYRFLANEVRGVADATVYSVKPLSADEKRAISQSFASKVGKHTLNISNIVDKSLIGGVKLRIGNRIYDGSISSKLETIHRGLLAHRS</sequence>
<accession>P17675</accession>
<accession>D5DWG4</accession>
<keyword id="KW-0066">ATP synthesis</keyword>
<keyword id="KW-1003">Cell membrane</keyword>
<keyword id="KW-0139">CF(1)</keyword>
<keyword id="KW-0375">Hydrogen ion transport</keyword>
<keyword id="KW-0406">Ion transport</keyword>
<keyword id="KW-0472">Membrane</keyword>
<keyword id="KW-1185">Reference proteome</keyword>
<keyword id="KW-0813">Transport</keyword>